<sequence length="138" mass="15985">MIKCTRRIEFDAGHRIIGHQNKCQYLHGHRYVLEITIAAKNTDELGMVVDFGLIKDLAKGWVDENFDHSLILHQGDKEIGQKIESHTGQKVYYLKNNPTAENIALHLKNEIFPKLFESQKFFVTNIKLFETPNCFVEV</sequence>
<gene>
    <name type="primary">queD</name>
    <name type="ordered locus">RBE_1097</name>
</gene>
<protein>
    <recommendedName>
        <fullName>6-carboxy-5,6,7,8-tetrahydropterin synthase</fullName>
        <shortName>CPH4 synthase</shortName>
        <ecNumber>4.1.2.50</ecNumber>
    </recommendedName>
    <alternativeName>
        <fullName>Queuosine biosynthesis protein QueD</fullName>
    </alternativeName>
</protein>
<organism>
    <name type="scientific">Rickettsia bellii (strain RML369-C)</name>
    <dbReference type="NCBI Taxonomy" id="336407"/>
    <lineage>
        <taxon>Bacteria</taxon>
        <taxon>Pseudomonadati</taxon>
        <taxon>Pseudomonadota</taxon>
        <taxon>Alphaproteobacteria</taxon>
        <taxon>Rickettsiales</taxon>
        <taxon>Rickettsiaceae</taxon>
        <taxon>Rickettsieae</taxon>
        <taxon>Rickettsia</taxon>
        <taxon>belli group</taxon>
    </lineage>
</organism>
<keyword id="KW-0456">Lyase</keyword>
<keyword id="KW-0479">Metal-binding</keyword>
<keyword id="KW-0671">Queuosine biosynthesis</keyword>
<keyword id="KW-0862">Zinc</keyword>
<comment type="function">
    <text evidence="1">Catalyzes the conversion of 7,8-dihydroneopterin triphosphate (H2NTP) to 6-carboxy-5,6,7,8-tetrahydropterin (CPH4) and acetaldehyde.</text>
</comment>
<comment type="catalytic activity">
    <reaction>
        <text>7,8-dihydroneopterin 3'-triphosphate + H2O = 6-carboxy-5,6,7,8-tetrahydropterin + triphosphate + acetaldehyde + 2 H(+)</text>
        <dbReference type="Rhea" id="RHEA:27966"/>
        <dbReference type="ChEBI" id="CHEBI:15343"/>
        <dbReference type="ChEBI" id="CHEBI:15377"/>
        <dbReference type="ChEBI" id="CHEBI:15378"/>
        <dbReference type="ChEBI" id="CHEBI:18036"/>
        <dbReference type="ChEBI" id="CHEBI:58462"/>
        <dbReference type="ChEBI" id="CHEBI:61032"/>
        <dbReference type="EC" id="4.1.2.50"/>
    </reaction>
</comment>
<comment type="cofactor">
    <cofactor evidence="1">
        <name>Zn(2+)</name>
        <dbReference type="ChEBI" id="CHEBI:29105"/>
    </cofactor>
    <text evidence="1">Binds 1 zinc ion per subunit.</text>
</comment>
<comment type="pathway">
    <text>Purine metabolism; 7-cyano-7-deazaguanine biosynthesis.</text>
</comment>
<comment type="miscellaneous">
    <text evidence="1">The active site is at the interface between 2 subunits. The proton acceptor Cys is on one subunit, and the charge relay system is on the other subunit (By similarity).</text>
</comment>
<comment type="similarity">
    <text evidence="2">Belongs to the PTPS family. QueD subfamily.</text>
</comment>
<evidence type="ECO:0000250" key="1"/>
<evidence type="ECO:0000305" key="2"/>
<reference key="1">
    <citation type="journal article" date="2006" name="PLoS Genet.">
        <title>Genome sequence of Rickettsia bellii illuminates the role of amoebae in gene exchanges between intracellular pathogens.</title>
        <authorList>
            <person name="Ogata H."/>
            <person name="La Scola B."/>
            <person name="Audic S."/>
            <person name="Renesto P."/>
            <person name="Blanc G."/>
            <person name="Robert C."/>
            <person name="Fournier P.-E."/>
            <person name="Claverie J.-M."/>
            <person name="Raoult D."/>
        </authorList>
    </citation>
    <scope>NUCLEOTIDE SEQUENCE [LARGE SCALE GENOMIC DNA]</scope>
    <source>
        <strain>RML369-C</strain>
    </source>
</reference>
<accession>Q1RHI6</accession>
<feature type="chain" id="PRO_0000272629" description="6-carboxy-5,6,7,8-tetrahydropterin synthase">
    <location>
        <begin position="1"/>
        <end position="138"/>
    </location>
</feature>
<feature type="active site" description="Proton acceptor" evidence="1">
    <location>
        <position position="23"/>
    </location>
</feature>
<feature type="active site" description="Charge relay system" evidence="1">
    <location>
        <position position="68"/>
    </location>
</feature>
<feature type="active site" description="Charge relay system" evidence="1">
    <location>
        <position position="130"/>
    </location>
</feature>
<feature type="binding site" evidence="1">
    <location>
        <position position="14"/>
    </location>
    <ligand>
        <name>Zn(2+)</name>
        <dbReference type="ChEBI" id="CHEBI:29105"/>
    </ligand>
</feature>
<feature type="binding site" evidence="1">
    <location>
        <position position="27"/>
    </location>
    <ligand>
        <name>Zn(2+)</name>
        <dbReference type="ChEBI" id="CHEBI:29105"/>
    </ligand>
</feature>
<feature type="binding site" evidence="1">
    <location>
        <position position="29"/>
    </location>
    <ligand>
        <name>Zn(2+)</name>
        <dbReference type="ChEBI" id="CHEBI:29105"/>
    </ligand>
</feature>
<dbReference type="EC" id="4.1.2.50"/>
<dbReference type="EMBL" id="CP000087">
    <property type="protein sequence ID" value="ABE05178.1"/>
    <property type="molecule type" value="Genomic_DNA"/>
</dbReference>
<dbReference type="RefSeq" id="WP_011477756.1">
    <property type="nucleotide sequence ID" value="NC_007940.1"/>
</dbReference>
<dbReference type="SMR" id="Q1RHI6"/>
<dbReference type="KEGG" id="rbe:RBE_1097"/>
<dbReference type="eggNOG" id="COG0720">
    <property type="taxonomic scope" value="Bacteria"/>
</dbReference>
<dbReference type="HOGENOM" id="CLU_111016_1_1_5"/>
<dbReference type="OrthoDB" id="9804698at2"/>
<dbReference type="UniPathway" id="UPA00391"/>
<dbReference type="Proteomes" id="UP000001951">
    <property type="component" value="Chromosome"/>
</dbReference>
<dbReference type="GO" id="GO:0070497">
    <property type="term" value="F:6-carboxytetrahydropterin synthase activity"/>
    <property type="evidence" value="ECO:0007669"/>
    <property type="project" value="UniProtKB-EC"/>
</dbReference>
<dbReference type="GO" id="GO:0046872">
    <property type="term" value="F:metal ion binding"/>
    <property type="evidence" value="ECO:0007669"/>
    <property type="project" value="UniProtKB-KW"/>
</dbReference>
<dbReference type="GO" id="GO:0008616">
    <property type="term" value="P:queuosine biosynthetic process"/>
    <property type="evidence" value="ECO:0007669"/>
    <property type="project" value="UniProtKB-KW"/>
</dbReference>
<dbReference type="Gene3D" id="3.30.479.10">
    <property type="entry name" value="6-pyruvoyl tetrahydropterin synthase/QueD"/>
    <property type="match status" value="2"/>
</dbReference>
<dbReference type="InterPro" id="IPR007115">
    <property type="entry name" value="6-PTP_synth/QueD"/>
</dbReference>
<dbReference type="InterPro" id="IPR038418">
    <property type="entry name" value="6-PTP_synth/QueD_sf"/>
</dbReference>
<dbReference type="PANTHER" id="PTHR12589:SF7">
    <property type="entry name" value="6-PYRUVOYL TETRAHYDROBIOPTERIN SYNTHASE"/>
    <property type="match status" value="1"/>
</dbReference>
<dbReference type="PANTHER" id="PTHR12589">
    <property type="entry name" value="PYRUVOYL TETRAHYDROBIOPTERIN SYNTHASE"/>
    <property type="match status" value="1"/>
</dbReference>
<dbReference type="Pfam" id="PF01242">
    <property type="entry name" value="PTPS"/>
    <property type="match status" value="1"/>
</dbReference>
<dbReference type="SUPFAM" id="SSF55620">
    <property type="entry name" value="Tetrahydrobiopterin biosynthesis enzymes-like"/>
    <property type="match status" value="1"/>
</dbReference>
<name>QUED_RICBR</name>
<proteinExistence type="inferred from homology"/>